<name>RS13_MYCTU</name>
<dbReference type="EMBL" id="AL123456">
    <property type="protein sequence ID" value="CCP46282.1"/>
    <property type="molecule type" value="Genomic_DNA"/>
</dbReference>
<dbReference type="PIR" id="A70566">
    <property type="entry name" value="A70566"/>
</dbReference>
<dbReference type="RefSeq" id="NP_217977.1">
    <property type="nucleotide sequence ID" value="NC_000962.3"/>
</dbReference>
<dbReference type="RefSeq" id="WP_003418360.1">
    <property type="nucleotide sequence ID" value="NZ_NVQJ01000091.1"/>
</dbReference>
<dbReference type="PDB" id="5V93">
    <property type="method" value="EM"/>
    <property type="resolution" value="4.00 A"/>
    <property type="chains" value="m=1-124"/>
</dbReference>
<dbReference type="PDB" id="7KGB">
    <property type="method" value="EM"/>
    <property type="resolution" value="2.70 A"/>
    <property type="chains" value="m=1-124"/>
</dbReference>
<dbReference type="PDB" id="7MSC">
    <property type="method" value="EM"/>
    <property type="resolution" value="2.97 A"/>
    <property type="chains" value="m=1-124"/>
</dbReference>
<dbReference type="PDB" id="7MSH">
    <property type="method" value="EM"/>
    <property type="resolution" value="3.23 A"/>
    <property type="chains" value="m=1-124"/>
</dbReference>
<dbReference type="PDB" id="7MSM">
    <property type="method" value="EM"/>
    <property type="resolution" value="2.79 A"/>
    <property type="chains" value="m=1-124"/>
</dbReference>
<dbReference type="PDB" id="7MSZ">
    <property type="method" value="EM"/>
    <property type="resolution" value="3.10 A"/>
    <property type="chains" value="m=1-124"/>
</dbReference>
<dbReference type="PDB" id="7MT2">
    <property type="method" value="EM"/>
    <property type="resolution" value="2.76 A"/>
    <property type="chains" value="m=1-124"/>
</dbReference>
<dbReference type="PDB" id="7MT3">
    <property type="method" value="EM"/>
    <property type="resolution" value="2.80 A"/>
    <property type="chains" value="m=1-124"/>
</dbReference>
<dbReference type="PDB" id="7MT7">
    <property type="method" value="EM"/>
    <property type="resolution" value="2.71 A"/>
    <property type="chains" value="m=1-124"/>
</dbReference>
<dbReference type="PDB" id="7SFR">
    <property type="method" value="EM"/>
    <property type="resolution" value="2.60 A"/>
    <property type="chains" value="m=1-124"/>
</dbReference>
<dbReference type="PDBsum" id="5V93"/>
<dbReference type="PDBsum" id="7KGB"/>
<dbReference type="PDBsum" id="7MSC"/>
<dbReference type="PDBsum" id="7MSH"/>
<dbReference type="PDBsum" id="7MSM"/>
<dbReference type="PDBsum" id="7MSZ"/>
<dbReference type="PDBsum" id="7MT2"/>
<dbReference type="PDBsum" id="7MT3"/>
<dbReference type="PDBsum" id="7MT7"/>
<dbReference type="PDBsum" id="7SFR"/>
<dbReference type="EMDB" id="EMD-22865"/>
<dbReference type="EMDB" id="EMD-23961"/>
<dbReference type="EMDB" id="EMD-23962"/>
<dbReference type="EMDB" id="EMD-23969"/>
<dbReference type="EMDB" id="EMD-23972"/>
<dbReference type="EMDB" id="EMD-23974"/>
<dbReference type="EMDB" id="EMD-23975"/>
<dbReference type="EMDB" id="EMD-23976"/>
<dbReference type="EMDB" id="EMD-8645"/>
<dbReference type="SMR" id="P9WH61"/>
<dbReference type="FunCoup" id="P9WH61">
    <property type="interactions" value="505"/>
</dbReference>
<dbReference type="STRING" id="83332.Rv3460c"/>
<dbReference type="PaxDb" id="83332-Rv3460c"/>
<dbReference type="DNASU" id="887514"/>
<dbReference type="GeneID" id="45427449"/>
<dbReference type="GeneID" id="887514"/>
<dbReference type="KEGG" id="mtu:Rv3460c"/>
<dbReference type="KEGG" id="mtv:RVBD_3460c"/>
<dbReference type="TubercuList" id="Rv3460c"/>
<dbReference type="eggNOG" id="COG0099">
    <property type="taxonomic scope" value="Bacteria"/>
</dbReference>
<dbReference type="InParanoid" id="P9WH61"/>
<dbReference type="OrthoDB" id="9803610at2"/>
<dbReference type="PhylomeDB" id="P9WH61"/>
<dbReference type="PRO" id="PR:P9WH61"/>
<dbReference type="Proteomes" id="UP000001584">
    <property type="component" value="Chromosome"/>
</dbReference>
<dbReference type="GO" id="GO:0005829">
    <property type="term" value="C:cytosol"/>
    <property type="evidence" value="ECO:0000318"/>
    <property type="project" value="GO_Central"/>
</dbReference>
<dbReference type="GO" id="GO:0005886">
    <property type="term" value="C:plasma membrane"/>
    <property type="evidence" value="ECO:0007005"/>
    <property type="project" value="MTBBASE"/>
</dbReference>
<dbReference type="GO" id="GO:0015935">
    <property type="term" value="C:small ribosomal subunit"/>
    <property type="evidence" value="ECO:0000318"/>
    <property type="project" value="GO_Central"/>
</dbReference>
<dbReference type="GO" id="GO:0019843">
    <property type="term" value="F:rRNA binding"/>
    <property type="evidence" value="ECO:0007669"/>
    <property type="project" value="UniProtKB-UniRule"/>
</dbReference>
<dbReference type="GO" id="GO:0003735">
    <property type="term" value="F:structural constituent of ribosome"/>
    <property type="evidence" value="ECO:0007669"/>
    <property type="project" value="InterPro"/>
</dbReference>
<dbReference type="GO" id="GO:0000049">
    <property type="term" value="F:tRNA binding"/>
    <property type="evidence" value="ECO:0007669"/>
    <property type="project" value="UniProtKB-UniRule"/>
</dbReference>
<dbReference type="GO" id="GO:0006412">
    <property type="term" value="P:translation"/>
    <property type="evidence" value="ECO:0007669"/>
    <property type="project" value="UniProtKB-UniRule"/>
</dbReference>
<dbReference type="FunFam" id="1.10.8.50:FF:000001">
    <property type="entry name" value="30S ribosomal protein S13"/>
    <property type="match status" value="1"/>
</dbReference>
<dbReference type="FunFam" id="4.10.910.10:FF:000001">
    <property type="entry name" value="30S ribosomal protein S13"/>
    <property type="match status" value="1"/>
</dbReference>
<dbReference type="Gene3D" id="1.10.8.50">
    <property type="match status" value="1"/>
</dbReference>
<dbReference type="Gene3D" id="4.10.910.10">
    <property type="entry name" value="30s ribosomal protein s13, domain 2"/>
    <property type="match status" value="1"/>
</dbReference>
<dbReference type="HAMAP" id="MF_01315">
    <property type="entry name" value="Ribosomal_uS13"/>
    <property type="match status" value="1"/>
</dbReference>
<dbReference type="InterPro" id="IPR027437">
    <property type="entry name" value="Rbsml_uS13_C"/>
</dbReference>
<dbReference type="InterPro" id="IPR001892">
    <property type="entry name" value="Ribosomal_uS13"/>
</dbReference>
<dbReference type="InterPro" id="IPR010979">
    <property type="entry name" value="Ribosomal_uS13-like_H2TH"/>
</dbReference>
<dbReference type="InterPro" id="IPR019980">
    <property type="entry name" value="Ribosomal_uS13_bac-type"/>
</dbReference>
<dbReference type="InterPro" id="IPR018269">
    <property type="entry name" value="Ribosomal_uS13_CS"/>
</dbReference>
<dbReference type="NCBIfam" id="TIGR03631">
    <property type="entry name" value="uS13_bact"/>
    <property type="match status" value="1"/>
</dbReference>
<dbReference type="PANTHER" id="PTHR10871">
    <property type="entry name" value="30S RIBOSOMAL PROTEIN S13/40S RIBOSOMAL PROTEIN S18"/>
    <property type="match status" value="1"/>
</dbReference>
<dbReference type="PANTHER" id="PTHR10871:SF1">
    <property type="entry name" value="SMALL RIBOSOMAL SUBUNIT PROTEIN US13M"/>
    <property type="match status" value="1"/>
</dbReference>
<dbReference type="Pfam" id="PF00416">
    <property type="entry name" value="Ribosomal_S13"/>
    <property type="match status" value="1"/>
</dbReference>
<dbReference type="PIRSF" id="PIRSF002134">
    <property type="entry name" value="Ribosomal_S13"/>
    <property type="match status" value="1"/>
</dbReference>
<dbReference type="SUPFAM" id="SSF46946">
    <property type="entry name" value="S13-like H2TH domain"/>
    <property type="match status" value="1"/>
</dbReference>
<dbReference type="PROSITE" id="PS00646">
    <property type="entry name" value="RIBOSOMAL_S13_1"/>
    <property type="match status" value="1"/>
</dbReference>
<dbReference type="PROSITE" id="PS50159">
    <property type="entry name" value="RIBOSOMAL_S13_2"/>
    <property type="match status" value="1"/>
</dbReference>
<evidence type="ECO:0000255" key="1">
    <source>
        <dbReference type="HAMAP-Rule" id="MF_01315"/>
    </source>
</evidence>
<evidence type="ECO:0000256" key="2">
    <source>
        <dbReference type="SAM" id="MobiDB-lite"/>
    </source>
</evidence>
<evidence type="ECO:0000305" key="3"/>
<reference key="1">
    <citation type="journal article" date="1998" name="Nature">
        <title>Deciphering the biology of Mycobacterium tuberculosis from the complete genome sequence.</title>
        <authorList>
            <person name="Cole S.T."/>
            <person name="Brosch R."/>
            <person name="Parkhill J."/>
            <person name="Garnier T."/>
            <person name="Churcher C.M."/>
            <person name="Harris D.E."/>
            <person name="Gordon S.V."/>
            <person name="Eiglmeier K."/>
            <person name="Gas S."/>
            <person name="Barry C.E. III"/>
            <person name="Tekaia F."/>
            <person name="Badcock K."/>
            <person name="Basham D."/>
            <person name="Brown D."/>
            <person name="Chillingworth T."/>
            <person name="Connor R."/>
            <person name="Davies R.M."/>
            <person name="Devlin K."/>
            <person name="Feltwell T."/>
            <person name="Gentles S."/>
            <person name="Hamlin N."/>
            <person name="Holroyd S."/>
            <person name="Hornsby T."/>
            <person name="Jagels K."/>
            <person name="Krogh A."/>
            <person name="McLean J."/>
            <person name="Moule S."/>
            <person name="Murphy L.D."/>
            <person name="Oliver S."/>
            <person name="Osborne J."/>
            <person name="Quail M.A."/>
            <person name="Rajandream M.A."/>
            <person name="Rogers J."/>
            <person name="Rutter S."/>
            <person name="Seeger K."/>
            <person name="Skelton S."/>
            <person name="Squares S."/>
            <person name="Squares R."/>
            <person name="Sulston J.E."/>
            <person name="Taylor K."/>
            <person name="Whitehead S."/>
            <person name="Barrell B.G."/>
        </authorList>
    </citation>
    <scope>NUCLEOTIDE SEQUENCE [LARGE SCALE GENOMIC DNA]</scope>
    <source>
        <strain>ATCC 25618 / H37Rv</strain>
    </source>
</reference>
<reference key="2">
    <citation type="journal article" date="2011" name="Mol. Cell. Proteomics">
        <title>Proteogenomic analysis of Mycobacterium tuberculosis by high resolution mass spectrometry.</title>
        <authorList>
            <person name="Kelkar D.S."/>
            <person name="Kumar D."/>
            <person name="Kumar P."/>
            <person name="Balakrishnan L."/>
            <person name="Muthusamy B."/>
            <person name="Yadav A.K."/>
            <person name="Shrivastava P."/>
            <person name="Marimuthu A."/>
            <person name="Anand S."/>
            <person name="Sundaram H."/>
            <person name="Kingsbury R."/>
            <person name="Harsha H.C."/>
            <person name="Nair B."/>
            <person name="Prasad T.S."/>
            <person name="Chauhan D.S."/>
            <person name="Katoch K."/>
            <person name="Katoch V.M."/>
            <person name="Kumar P."/>
            <person name="Chaerkady R."/>
            <person name="Ramachandran S."/>
            <person name="Dash D."/>
            <person name="Pandey A."/>
        </authorList>
    </citation>
    <scope>IDENTIFICATION BY MASS SPECTROMETRY [LARGE SCALE ANALYSIS]</scope>
    <source>
        <strain>ATCC 25618 / H37Rv</strain>
    </source>
</reference>
<sequence>MARLVGVDLPRDKRMEVALTYIFGIGRTRSNEILAATGIDRDLRTRDLTEEQLIHLRDYIEANLKVEGDLRREVQADIRRKIEIGCYQGLRHRRGMPVRGQRTKTNARTRKGPKRTIAGKKKAR</sequence>
<accession>P9WH61</accession>
<accession>L0TE71</accession>
<accession>O06327</accession>
<gene>
    <name evidence="1" type="primary">rpsM</name>
    <name type="ordered locus">Rv3460c</name>
    <name type="ORF">MTCY13E12.13c</name>
</gene>
<comment type="function">
    <text evidence="1">Located at the top of the head of the 30S subunit, it contacts several helices of the 16S rRNA. In the 70S ribosome it contacts the 23S rRNA (bridge B1a) and protein L5 of the 50S subunit (bridge B1b), connecting the 2 subunits; these bridges are implicated in subunit movement. Contacts the tRNAs in the A and P-sites.</text>
</comment>
<comment type="subunit">
    <text evidence="1">Part of the 30S ribosomal subunit. Forms a loose heterodimer with protein S19. Forms two bridges to the 50S subunit in the 70S ribosome.</text>
</comment>
<comment type="similarity">
    <text evidence="1">Belongs to the universal ribosomal protein uS13 family.</text>
</comment>
<organism>
    <name type="scientific">Mycobacterium tuberculosis (strain ATCC 25618 / H37Rv)</name>
    <dbReference type="NCBI Taxonomy" id="83332"/>
    <lineage>
        <taxon>Bacteria</taxon>
        <taxon>Bacillati</taxon>
        <taxon>Actinomycetota</taxon>
        <taxon>Actinomycetes</taxon>
        <taxon>Mycobacteriales</taxon>
        <taxon>Mycobacteriaceae</taxon>
        <taxon>Mycobacterium</taxon>
        <taxon>Mycobacterium tuberculosis complex</taxon>
    </lineage>
</organism>
<keyword id="KW-0002">3D-structure</keyword>
<keyword id="KW-1185">Reference proteome</keyword>
<keyword id="KW-0687">Ribonucleoprotein</keyword>
<keyword id="KW-0689">Ribosomal protein</keyword>
<keyword id="KW-0694">RNA-binding</keyword>
<keyword id="KW-0699">rRNA-binding</keyword>
<keyword id="KW-0820">tRNA-binding</keyword>
<feature type="chain" id="PRO_0000132114" description="Small ribosomal subunit protein uS13">
    <location>
        <begin position="1"/>
        <end position="124"/>
    </location>
</feature>
<feature type="region of interest" description="Disordered" evidence="2">
    <location>
        <begin position="94"/>
        <end position="124"/>
    </location>
</feature>
<proteinExistence type="evidence at protein level"/>
<protein>
    <recommendedName>
        <fullName evidence="1">Small ribosomal subunit protein uS13</fullName>
    </recommendedName>
    <alternativeName>
        <fullName evidence="3">30S ribosomal protein S13</fullName>
    </alternativeName>
</protein>